<protein>
    <recommendedName>
        <fullName evidence="1">Energy-coupling factor transporter ATP-binding protein EcfA1</fullName>
        <shortName evidence="1">ECF transporter A component EcfA1</shortName>
        <ecNumber evidence="1">7.-.-.-</ecNumber>
    </recommendedName>
</protein>
<gene>
    <name evidence="1" type="primary">ecfA1</name>
    <name type="synonym">cbiO1</name>
    <name type="ordered locus">SAUSA300_2176</name>
</gene>
<keyword id="KW-0067">ATP-binding</keyword>
<keyword id="KW-1003">Cell membrane</keyword>
<keyword id="KW-0472">Membrane</keyword>
<keyword id="KW-0547">Nucleotide-binding</keyword>
<keyword id="KW-1278">Translocase</keyword>
<keyword id="KW-0813">Transport</keyword>
<sequence>MEDKNSVIVFKNVSFQYQSDASFTLKDVSFNIPKGQWTSIVGHNGSGKSTIAKLMIGIEKVKSGEIFYNNQAITDDNFEKLRKDIGIVFQNPDNQFVGSIVKYDVAFGLENHAVPYDEMHRRVSEALKQVDMLERADYEPNALSGGQKQRVAIASVLALNPSVIILDEATSMLDPDARQNLLDLVRKVKSEHNITIISITHDLSEAMEADHVIVMNKGTVYKEGTATEIFDNAEELTRIGLDLPFPIKINQMLGHQTSFLTYEGLVDQL</sequence>
<feature type="chain" id="PRO_0000287986" description="Energy-coupling factor transporter ATP-binding protein EcfA1">
    <location>
        <begin position="1"/>
        <end position="269"/>
    </location>
</feature>
<feature type="domain" description="ABC transporter" evidence="1">
    <location>
        <begin position="8"/>
        <end position="242"/>
    </location>
</feature>
<feature type="binding site" evidence="1">
    <location>
        <begin position="42"/>
        <end position="49"/>
    </location>
    <ligand>
        <name>ATP</name>
        <dbReference type="ChEBI" id="CHEBI:30616"/>
    </ligand>
</feature>
<name>ECFA1_STAA3</name>
<organism>
    <name type="scientific">Staphylococcus aureus (strain USA300)</name>
    <dbReference type="NCBI Taxonomy" id="367830"/>
    <lineage>
        <taxon>Bacteria</taxon>
        <taxon>Bacillati</taxon>
        <taxon>Bacillota</taxon>
        <taxon>Bacilli</taxon>
        <taxon>Bacillales</taxon>
        <taxon>Staphylococcaceae</taxon>
        <taxon>Staphylococcus</taxon>
    </lineage>
</organism>
<dbReference type="EC" id="7.-.-.-" evidence="1"/>
<dbReference type="EMBL" id="CP000255">
    <property type="protein sequence ID" value="ABD21380.1"/>
    <property type="molecule type" value="Genomic_DNA"/>
</dbReference>
<dbReference type="RefSeq" id="WP_000389662.1">
    <property type="nucleotide sequence ID" value="NZ_CP027476.1"/>
</dbReference>
<dbReference type="SMR" id="Q2FER7"/>
<dbReference type="KEGG" id="saa:SAUSA300_2176"/>
<dbReference type="HOGENOM" id="CLU_000604_1_22_9"/>
<dbReference type="OMA" id="HPRDQFV"/>
<dbReference type="Proteomes" id="UP000001939">
    <property type="component" value="Chromosome"/>
</dbReference>
<dbReference type="GO" id="GO:0043190">
    <property type="term" value="C:ATP-binding cassette (ABC) transporter complex"/>
    <property type="evidence" value="ECO:0007669"/>
    <property type="project" value="TreeGrafter"/>
</dbReference>
<dbReference type="GO" id="GO:0005524">
    <property type="term" value="F:ATP binding"/>
    <property type="evidence" value="ECO:0007669"/>
    <property type="project" value="UniProtKB-KW"/>
</dbReference>
<dbReference type="GO" id="GO:0016887">
    <property type="term" value="F:ATP hydrolysis activity"/>
    <property type="evidence" value="ECO:0007669"/>
    <property type="project" value="InterPro"/>
</dbReference>
<dbReference type="GO" id="GO:0042626">
    <property type="term" value="F:ATPase-coupled transmembrane transporter activity"/>
    <property type="evidence" value="ECO:0007669"/>
    <property type="project" value="TreeGrafter"/>
</dbReference>
<dbReference type="CDD" id="cd03225">
    <property type="entry name" value="ABC_cobalt_CbiO_domain1"/>
    <property type="match status" value="1"/>
</dbReference>
<dbReference type="FunFam" id="3.40.50.300:FF:000224">
    <property type="entry name" value="Energy-coupling factor transporter ATP-binding protein EcfA"/>
    <property type="match status" value="1"/>
</dbReference>
<dbReference type="Gene3D" id="3.40.50.300">
    <property type="entry name" value="P-loop containing nucleotide triphosphate hydrolases"/>
    <property type="match status" value="1"/>
</dbReference>
<dbReference type="InterPro" id="IPR003593">
    <property type="entry name" value="AAA+_ATPase"/>
</dbReference>
<dbReference type="InterPro" id="IPR003439">
    <property type="entry name" value="ABC_transporter-like_ATP-bd"/>
</dbReference>
<dbReference type="InterPro" id="IPR017871">
    <property type="entry name" value="ABC_transporter-like_CS"/>
</dbReference>
<dbReference type="InterPro" id="IPR015856">
    <property type="entry name" value="ABC_transpr_CbiO/EcfA_su"/>
</dbReference>
<dbReference type="InterPro" id="IPR050095">
    <property type="entry name" value="ECF_ABC_transporter_ATP-bd"/>
</dbReference>
<dbReference type="InterPro" id="IPR030947">
    <property type="entry name" value="EcfA_1"/>
</dbReference>
<dbReference type="InterPro" id="IPR027417">
    <property type="entry name" value="P-loop_NTPase"/>
</dbReference>
<dbReference type="NCBIfam" id="TIGR04520">
    <property type="entry name" value="ECF_ATPase_1"/>
    <property type="match status" value="1"/>
</dbReference>
<dbReference type="NCBIfam" id="NF010167">
    <property type="entry name" value="PRK13648.1"/>
    <property type="match status" value="1"/>
</dbReference>
<dbReference type="PANTHER" id="PTHR43553:SF24">
    <property type="entry name" value="ENERGY-COUPLING FACTOR TRANSPORTER ATP-BINDING PROTEIN ECFA1"/>
    <property type="match status" value="1"/>
</dbReference>
<dbReference type="PANTHER" id="PTHR43553">
    <property type="entry name" value="HEAVY METAL TRANSPORTER"/>
    <property type="match status" value="1"/>
</dbReference>
<dbReference type="Pfam" id="PF00005">
    <property type="entry name" value="ABC_tran"/>
    <property type="match status" value="1"/>
</dbReference>
<dbReference type="SMART" id="SM00382">
    <property type="entry name" value="AAA"/>
    <property type="match status" value="1"/>
</dbReference>
<dbReference type="SUPFAM" id="SSF52540">
    <property type="entry name" value="P-loop containing nucleoside triphosphate hydrolases"/>
    <property type="match status" value="1"/>
</dbReference>
<dbReference type="PROSITE" id="PS00211">
    <property type="entry name" value="ABC_TRANSPORTER_1"/>
    <property type="match status" value="1"/>
</dbReference>
<dbReference type="PROSITE" id="PS50893">
    <property type="entry name" value="ABC_TRANSPORTER_2"/>
    <property type="match status" value="1"/>
</dbReference>
<dbReference type="PROSITE" id="PS51246">
    <property type="entry name" value="CBIO"/>
    <property type="match status" value="1"/>
</dbReference>
<accession>Q2FER7</accession>
<proteinExistence type="inferred from homology"/>
<comment type="function">
    <text evidence="1">ATP-binding (A) component of a common energy-coupling factor (ECF) ABC-transporter complex. Unlike classic ABC transporters this ECF transporter provides the energy necessary to transport a number of different substrates.</text>
</comment>
<comment type="subunit">
    <text evidence="1">Forms a stable energy-coupling factor (ECF) transporter complex composed of 2 membrane-embedded substrate-binding proteins (S component), 2 ATP-binding proteins (A component) and 2 transmembrane proteins (T component).</text>
</comment>
<comment type="subcellular location">
    <subcellularLocation>
        <location evidence="1">Cell membrane</location>
        <topology evidence="1">Peripheral membrane protein</topology>
    </subcellularLocation>
</comment>
<comment type="similarity">
    <text evidence="1">Belongs to the ABC transporter superfamily. Energy-coupling factor EcfA family.</text>
</comment>
<reference key="1">
    <citation type="journal article" date="2006" name="Lancet">
        <title>Complete genome sequence of USA300, an epidemic clone of community-acquired meticillin-resistant Staphylococcus aureus.</title>
        <authorList>
            <person name="Diep B.A."/>
            <person name="Gill S.R."/>
            <person name="Chang R.F."/>
            <person name="Phan T.H."/>
            <person name="Chen J.H."/>
            <person name="Davidson M.G."/>
            <person name="Lin F."/>
            <person name="Lin J."/>
            <person name="Carleton H.A."/>
            <person name="Mongodin E.F."/>
            <person name="Sensabaugh G.F."/>
            <person name="Perdreau-Remington F."/>
        </authorList>
    </citation>
    <scope>NUCLEOTIDE SEQUENCE [LARGE SCALE GENOMIC DNA]</scope>
    <source>
        <strain>USA300</strain>
    </source>
</reference>
<evidence type="ECO:0000255" key="1">
    <source>
        <dbReference type="HAMAP-Rule" id="MF_01710"/>
    </source>
</evidence>